<proteinExistence type="inferred from homology"/>
<evidence type="ECO:0000255" key="1">
    <source>
        <dbReference type="HAMAP-Rule" id="MF_00412"/>
    </source>
</evidence>
<sequence length="415" mass="43745">MTVPAPSQLDLRQEVHDAARRARVAARRLASLPTTVKDRALHAAADELLAHRDQILAANAEDLNAAREADTPAAMLDRLSLNPQRVDGIAAGLRQVAGLRDPVGEVLRGYTLPNGLQLRQQRVPLGVVGMIYEGRPNVTVDAFGLTLKSGNAALLRGSSSAAKSNEALVAVLRTALVGLELPADAVQLLSAADRATVTHLIQARGLVDVVIPRGGAGLIEAVVRDAQVPTIETGVGNCHVYVHQAADLDVAERILLNSKTRRPSVCNAAETLLVDAAIAETALPRLLAALQHAGVTVHLDPDEADLRREYLSLDIAVAVVDGVDAAIAHINEYGTGHTEAIVTTNLDAAQRFTEQIDAAAVMVNASTAFTDGEQFGFGAEIGISTQKLHARGPMGLPELTSTKWIAWGAGHTRPA</sequence>
<comment type="function">
    <text evidence="1">Catalyzes the NADPH-dependent reduction of L-glutamate 5-phosphate into L-glutamate 5-semialdehyde and phosphate. The product spontaneously undergoes cyclization to form 1-pyrroline-5-carboxylate.</text>
</comment>
<comment type="catalytic activity">
    <reaction evidence="1">
        <text>L-glutamate 5-semialdehyde + phosphate + NADP(+) = L-glutamyl 5-phosphate + NADPH + H(+)</text>
        <dbReference type="Rhea" id="RHEA:19541"/>
        <dbReference type="ChEBI" id="CHEBI:15378"/>
        <dbReference type="ChEBI" id="CHEBI:43474"/>
        <dbReference type="ChEBI" id="CHEBI:57783"/>
        <dbReference type="ChEBI" id="CHEBI:58066"/>
        <dbReference type="ChEBI" id="CHEBI:58274"/>
        <dbReference type="ChEBI" id="CHEBI:58349"/>
        <dbReference type="EC" id="1.2.1.41"/>
    </reaction>
</comment>
<comment type="pathway">
    <text evidence="1">Amino-acid biosynthesis; L-proline biosynthesis; L-glutamate 5-semialdehyde from L-glutamate: step 2/2.</text>
</comment>
<comment type="subcellular location">
    <subcellularLocation>
        <location evidence="1">Cytoplasm</location>
    </subcellularLocation>
</comment>
<comment type="similarity">
    <text evidence="1">Belongs to the gamma-glutamyl phosphate reductase family.</text>
</comment>
<protein>
    <recommendedName>
        <fullName evidence="1">Gamma-glutamyl phosphate reductase</fullName>
        <shortName evidence="1">GPR</shortName>
        <ecNumber evidence="1">1.2.1.41</ecNumber>
    </recommendedName>
    <alternativeName>
        <fullName evidence="1">Glutamate-5-semialdehyde dehydrogenase</fullName>
    </alternativeName>
    <alternativeName>
        <fullName evidence="1">Glutamyl-gamma-semialdehyde dehydrogenase</fullName>
        <shortName evidence="1">GSA dehydrogenase</shortName>
    </alternativeName>
</protein>
<accession>P65789</accession>
<accession>A0A1R3Y1D8</accession>
<accession>P71921</accession>
<accession>X2BKG4</accession>
<feature type="chain" id="PRO_0000189750" description="Gamma-glutamyl phosphate reductase">
    <location>
        <begin position="1"/>
        <end position="415"/>
    </location>
</feature>
<name>PROA_MYCBO</name>
<gene>
    <name evidence="1" type="primary">proA</name>
    <name type="ordered locus">BQ2027_MB2451C</name>
</gene>
<dbReference type="EC" id="1.2.1.41" evidence="1"/>
<dbReference type="EMBL" id="LT708304">
    <property type="protein sequence ID" value="SIU01066.1"/>
    <property type="molecule type" value="Genomic_DNA"/>
</dbReference>
<dbReference type="RefSeq" id="NP_856100.1">
    <property type="nucleotide sequence ID" value="NC_002945.3"/>
</dbReference>
<dbReference type="RefSeq" id="WP_003412516.1">
    <property type="nucleotide sequence ID" value="NC_002945.4"/>
</dbReference>
<dbReference type="SMR" id="P65789"/>
<dbReference type="KEGG" id="mbo:BQ2027_MB2451C"/>
<dbReference type="PATRIC" id="fig|233413.5.peg.2697"/>
<dbReference type="UniPathway" id="UPA00098">
    <property type="reaction ID" value="UER00360"/>
</dbReference>
<dbReference type="Proteomes" id="UP000001419">
    <property type="component" value="Chromosome"/>
</dbReference>
<dbReference type="GO" id="GO:0005737">
    <property type="term" value="C:cytoplasm"/>
    <property type="evidence" value="ECO:0007669"/>
    <property type="project" value="UniProtKB-SubCell"/>
</dbReference>
<dbReference type="GO" id="GO:0004350">
    <property type="term" value="F:glutamate-5-semialdehyde dehydrogenase activity"/>
    <property type="evidence" value="ECO:0007669"/>
    <property type="project" value="UniProtKB-UniRule"/>
</dbReference>
<dbReference type="GO" id="GO:0050661">
    <property type="term" value="F:NADP binding"/>
    <property type="evidence" value="ECO:0007669"/>
    <property type="project" value="InterPro"/>
</dbReference>
<dbReference type="GO" id="GO:0055129">
    <property type="term" value="P:L-proline biosynthetic process"/>
    <property type="evidence" value="ECO:0007669"/>
    <property type="project" value="UniProtKB-UniRule"/>
</dbReference>
<dbReference type="CDD" id="cd07079">
    <property type="entry name" value="ALDH_F18-19_ProA-GPR"/>
    <property type="match status" value="1"/>
</dbReference>
<dbReference type="FunFam" id="3.40.309.10:FF:000006">
    <property type="entry name" value="Gamma-glutamyl phosphate reductase"/>
    <property type="match status" value="1"/>
</dbReference>
<dbReference type="Gene3D" id="3.40.605.10">
    <property type="entry name" value="Aldehyde Dehydrogenase, Chain A, domain 1"/>
    <property type="match status" value="1"/>
</dbReference>
<dbReference type="Gene3D" id="3.40.309.10">
    <property type="entry name" value="Aldehyde Dehydrogenase, Chain A, domain 2"/>
    <property type="match status" value="1"/>
</dbReference>
<dbReference type="HAMAP" id="MF_00412">
    <property type="entry name" value="ProA"/>
    <property type="match status" value="1"/>
</dbReference>
<dbReference type="InterPro" id="IPR016161">
    <property type="entry name" value="Ald_DH/histidinol_DH"/>
</dbReference>
<dbReference type="InterPro" id="IPR016163">
    <property type="entry name" value="Ald_DH_C"/>
</dbReference>
<dbReference type="InterPro" id="IPR016162">
    <property type="entry name" value="Ald_DH_N"/>
</dbReference>
<dbReference type="InterPro" id="IPR015590">
    <property type="entry name" value="Aldehyde_DH_dom"/>
</dbReference>
<dbReference type="InterPro" id="IPR020593">
    <property type="entry name" value="G-glutamylP_reductase_CS"/>
</dbReference>
<dbReference type="InterPro" id="IPR012134">
    <property type="entry name" value="Glu-5-SA_DH"/>
</dbReference>
<dbReference type="InterPro" id="IPR000965">
    <property type="entry name" value="GPR_dom"/>
</dbReference>
<dbReference type="NCBIfam" id="NF001221">
    <property type="entry name" value="PRK00197.1"/>
    <property type="match status" value="1"/>
</dbReference>
<dbReference type="NCBIfam" id="TIGR00407">
    <property type="entry name" value="proA"/>
    <property type="match status" value="1"/>
</dbReference>
<dbReference type="PANTHER" id="PTHR11063:SF8">
    <property type="entry name" value="DELTA-1-PYRROLINE-5-CARBOXYLATE SYNTHASE"/>
    <property type="match status" value="1"/>
</dbReference>
<dbReference type="PANTHER" id="PTHR11063">
    <property type="entry name" value="GLUTAMATE SEMIALDEHYDE DEHYDROGENASE"/>
    <property type="match status" value="1"/>
</dbReference>
<dbReference type="Pfam" id="PF00171">
    <property type="entry name" value="Aldedh"/>
    <property type="match status" value="2"/>
</dbReference>
<dbReference type="PIRSF" id="PIRSF000151">
    <property type="entry name" value="GPR"/>
    <property type="match status" value="1"/>
</dbReference>
<dbReference type="SUPFAM" id="SSF53720">
    <property type="entry name" value="ALDH-like"/>
    <property type="match status" value="1"/>
</dbReference>
<dbReference type="PROSITE" id="PS01223">
    <property type="entry name" value="PROA"/>
    <property type="match status" value="1"/>
</dbReference>
<organism>
    <name type="scientific">Mycobacterium bovis (strain ATCC BAA-935 / AF2122/97)</name>
    <dbReference type="NCBI Taxonomy" id="233413"/>
    <lineage>
        <taxon>Bacteria</taxon>
        <taxon>Bacillati</taxon>
        <taxon>Actinomycetota</taxon>
        <taxon>Actinomycetes</taxon>
        <taxon>Mycobacteriales</taxon>
        <taxon>Mycobacteriaceae</taxon>
        <taxon>Mycobacterium</taxon>
        <taxon>Mycobacterium tuberculosis complex</taxon>
    </lineage>
</organism>
<keyword id="KW-0028">Amino-acid biosynthesis</keyword>
<keyword id="KW-0963">Cytoplasm</keyword>
<keyword id="KW-0521">NADP</keyword>
<keyword id="KW-0560">Oxidoreductase</keyword>
<keyword id="KW-0641">Proline biosynthesis</keyword>
<keyword id="KW-1185">Reference proteome</keyword>
<reference key="1">
    <citation type="journal article" date="2003" name="Proc. Natl. Acad. Sci. U.S.A.">
        <title>The complete genome sequence of Mycobacterium bovis.</title>
        <authorList>
            <person name="Garnier T."/>
            <person name="Eiglmeier K."/>
            <person name="Camus J.-C."/>
            <person name="Medina N."/>
            <person name="Mansoor H."/>
            <person name="Pryor M."/>
            <person name="Duthoy S."/>
            <person name="Grondin S."/>
            <person name="Lacroix C."/>
            <person name="Monsempe C."/>
            <person name="Simon S."/>
            <person name="Harris B."/>
            <person name="Atkin R."/>
            <person name="Doggett J."/>
            <person name="Mayes R."/>
            <person name="Keating L."/>
            <person name="Wheeler P.R."/>
            <person name="Parkhill J."/>
            <person name="Barrell B.G."/>
            <person name="Cole S.T."/>
            <person name="Gordon S.V."/>
            <person name="Hewinson R.G."/>
        </authorList>
    </citation>
    <scope>NUCLEOTIDE SEQUENCE [LARGE SCALE GENOMIC DNA]</scope>
    <source>
        <strain>ATCC BAA-935 / AF2122/97</strain>
    </source>
</reference>
<reference key="2">
    <citation type="journal article" date="2017" name="Genome Announc.">
        <title>Updated reference genome sequence and annotation of Mycobacterium bovis AF2122/97.</title>
        <authorList>
            <person name="Malone K.M."/>
            <person name="Farrell D."/>
            <person name="Stuber T.P."/>
            <person name="Schubert O.T."/>
            <person name="Aebersold R."/>
            <person name="Robbe-Austerman S."/>
            <person name="Gordon S.V."/>
        </authorList>
    </citation>
    <scope>NUCLEOTIDE SEQUENCE [LARGE SCALE GENOMIC DNA]</scope>
    <scope>GENOME REANNOTATION</scope>
    <source>
        <strain>ATCC BAA-935 / AF2122/97</strain>
    </source>
</reference>